<organism>
    <name type="scientific">Bacillus subtilis (strain 168)</name>
    <dbReference type="NCBI Taxonomy" id="224308"/>
    <lineage>
        <taxon>Bacteria</taxon>
        <taxon>Bacillati</taxon>
        <taxon>Bacillota</taxon>
        <taxon>Bacilli</taxon>
        <taxon>Bacillales</taxon>
        <taxon>Bacillaceae</taxon>
        <taxon>Bacillus</taxon>
    </lineage>
</organism>
<accession>O07619</accession>
<accession>Q796T3</accession>
<proteinExistence type="evidence at transcript level"/>
<name>YHFT_BACSU</name>
<reference key="1">
    <citation type="submission" date="1997-06" db="EMBL/GenBank/DDBJ databases">
        <authorList>
            <person name="Noback M.A."/>
            <person name="Terpstra P."/>
            <person name="Holsappel S."/>
            <person name="Venema G."/>
            <person name="Bron S."/>
        </authorList>
    </citation>
    <scope>NUCLEOTIDE SEQUENCE [GENOMIC DNA]</scope>
    <source>
        <strain>168</strain>
    </source>
</reference>
<reference key="2">
    <citation type="journal article" date="1997" name="Nature">
        <title>The complete genome sequence of the Gram-positive bacterium Bacillus subtilis.</title>
        <authorList>
            <person name="Kunst F."/>
            <person name="Ogasawara N."/>
            <person name="Moszer I."/>
            <person name="Albertini A.M."/>
            <person name="Alloni G."/>
            <person name="Azevedo V."/>
            <person name="Bertero M.G."/>
            <person name="Bessieres P."/>
            <person name="Bolotin A."/>
            <person name="Borchert S."/>
            <person name="Borriss R."/>
            <person name="Boursier L."/>
            <person name="Brans A."/>
            <person name="Braun M."/>
            <person name="Brignell S.C."/>
            <person name="Bron S."/>
            <person name="Brouillet S."/>
            <person name="Bruschi C.V."/>
            <person name="Caldwell B."/>
            <person name="Capuano V."/>
            <person name="Carter N.M."/>
            <person name="Choi S.-K."/>
            <person name="Codani J.-J."/>
            <person name="Connerton I.F."/>
            <person name="Cummings N.J."/>
            <person name="Daniel R.A."/>
            <person name="Denizot F."/>
            <person name="Devine K.M."/>
            <person name="Duesterhoeft A."/>
            <person name="Ehrlich S.D."/>
            <person name="Emmerson P.T."/>
            <person name="Entian K.-D."/>
            <person name="Errington J."/>
            <person name="Fabret C."/>
            <person name="Ferrari E."/>
            <person name="Foulger D."/>
            <person name="Fritz C."/>
            <person name="Fujita M."/>
            <person name="Fujita Y."/>
            <person name="Fuma S."/>
            <person name="Galizzi A."/>
            <person name="Galleron N."/>
            <person name="Ghim S.-Y."/>
            <person name="Glaser P."/>
            <person name="Goffeau A."/>
            <person name="Golightly E.J."/>
            <person name="Grandi G."/>
            <person name="Guiseppi G."/>
            <person name="Guy B.J."/>
            <person name="Haga K."/>
            <person name="Haiech J."/>
            <person name="Harwood C.R."/>
            <person name="Henaut A."/>
            <person name="Hilbert H."/>
            <person name="Holsappel S."/>
            <person name="Hosono S."/>
            <person name="Hullo M.-F."/>
            <person name="Itaya M."/>
            <person name="Jones L.-M."/>
            <person name="Joris B."/>
            <person name="Karamata D."/>
            <person name="Kasahara Y."/>
            <person name="Klaerr-Blanchard M."/>
            <person name="Klein C."/>
            <person name="Kobayashi Y."/>
            <person name="Koetter P."/>
            <person name="Koningstein G."/>
            <person name="Krogh S."/>
            <person name="Kumano M."/>
            <person name="Kurita K."/>
            <person name="Lapidus A."/>
            <person name="Lardinois S."/>
            <person name="Lauber J."/>
            <person name="Lazarevic V."/>
            <person name="Lee S.-M."/>
            <person name="Levine A."/>
            <person name="Liu H."/>
            <person name="Masuda S."/>
            <person name="Mauel C."/>
            <person name="Medigue C."/>
            <person name="Medina N."/>
            <person name="Mellado R.P."/>
            <person name="Mizuno M."/>
            <person name="Moestl D."/>
            <person name="Nakai S."/>
            <person name="Noback M."/>
            <person name="Noone D."/>
            <person name="O'Reilly M."/>
            <person name="Ogawa K."/>
            <person name="Ogiwara A."/>
            <person name="Oudega B."/>
            <person name="Park S.-H."/>
            <person name="Parro V."/>
            <person name="Pohl T.M."/>
            <person name="Portetelle D."/>
            <person name="Porwollik S."/>
            <person name="Prescott A.M."/>
            <person name="Presecan E."/>
            <person name="Pujic P."/>
            <person name="Purnelle B."/>
            <person name="Rapoport G."/>
            <person name="Rey M."/>
            <person name="Reynolds S."/>
            <person name="Rieger M."/>
            <person name="Rivolta C."/>
            <person name="Rocha E."/>
            <person name="Roche B."/>
            <person name="Rose M."/>
            <person name="Sadaie Y."/>
            <person name="Sato T."/>
            <person name="Scanlan E."/>
            <person name="Schleich S."/>
            <person name="Schroeter R."/>
            <person name="Scoffone F."/>
            <person name="Sekiguchi J."/>
            <person name="Sekowska A."/>
            <person name="Seror S.J."/>
            <person name="Serror P."/>
            <person name="Shin B.-S."/>
            <person name="Soldo B."/>
            <person name="Sorokin A."/>
            <person name="Tacconi E."/>
            <person name="Takagi T."/>
            <person name="Takahashi H."/>
            <person name="Takemaru K."/>
            <person name="Takeuchi M."/>
            <person name="Tamakoshi A."/>
            <person name="Tanaka T."/>
            <person name="Terpstra P."/>
            <person name="Tognoni A."/>
            <person name="Tosato V."/>
            <person name="Uchiyama S."/>
            <person name="Vandenbol M."/>
            <person name="Vannier F."/>
            <person name="Vassarotti A."/>
            <person name="Viari A."/>
            <person name="Wambutt R."/>
            <person name="Wedler E."/>
            <person name="Wedler H."/>
            <person name="Weitzenegger T."/>
            <person name="Winters P."/>
            <person name="Wipat A."/>
            <person name="Yamamoto H."/>
            <person name="Yamane K."/>
            <person name="Yasumoto K."/>
            <person name="Yata K."/>
            <person name="Yoshida K."/>
            <person name="Yoshikawa H.-F."/>
            <person name="Zumstein E."/>
            <person name="Yoshikawa H."/>
            <person name="Danchin A."/>
        </authorList>
    </citation>
    <scope>NUCLEOTIDE SEQUENCE [LARGE SCALE GENOMIC DNA]</scope>
    <source>
        <strain>168</strain>
    </source>
</reference>
<reference key="3">
    <citation type="journal article" date="2001" name="J. Bacteriol.">
        <title>RNA expression analysis using an antisense Bacillus subtilis genome array.</title>
        <authorList>
            <person name="Lee J.M."/>
            <person name="Zhang S."/>
            <person name="Saha S."/>
            <person name="Santa Anna S."/>
            <person name="Jiang C."/>
            <person name="Perkins J."/>
        </authorList>
    </citation>
    <scope>INDUCTION</scope>
    <scope>PROBABLE OPERON STRUCTURE</scope>
    <source>
        <strain>168 / PY79</strain>
    </source>
</reference>
<reference key="4">
    <citation type="journal article" date="2002" name="Genome Res.">
        <title>Conservation of the biotin regulon and the BirA regulatory signal in Eubacteria and Archaea.</title>
        <authorList>
            <person name="Rodionov D.A."/>
            <person name="Mironov A.A."/>
            <person name="Gelfand M.S."/>
        </authorList>
    </citation>
    <scope>DISCUSSION OF FUNCTION</scope>
</reference>
<protein>
    <recommendedName>
        <fullName>Uncharacterized acyl--CoA ligase YhfT</fullName>
        <ecNumber>6.2.1.-</ecNumber>
    </recommendedName>
</protein>
<comment type="function">
    <text>May be involved in fatty acid metabolism.</text>
</comment>
<comment type="induction">
    <text evidence="2">Repressed by presence of biotin, under control of BirA. Probably part of the bioY-yhfST operon.</text>
</comment>
<comment type="similarity">
    <text evidence="3">Belongs to the ATP-dependent AMP-binding enzyme family.</text>
</comment>
<dbReference type="EC" id="6.2.1.-"/>
<dbReference type="EMBL" id="Y14084">
    <property type="protein sequence ID" value="CAA74543.1"/>
    <property type="molecule type" value="Genomic_DNA"/>
</dbReference>
<dbReference type="EMBL" id="AL009126">
    <property type="protein sequence ID" value="CAB12876.1"/>
    <property type="molecule type" value="Genomic_DNA"/>
</dbReference>
<dbReference type="PIR" id="A69832">
    <property type="entry name" value="A69832"/>
</dbReference>
<dbReference type="RefSeq" id="NP_388917.1">
    <property type="nucleotide sequence ID" value="NC_000964.3"/>
</dbReference>
<dbReference type="RefSeq" id="WP_003244910.1">
    <property type="nucleotide sequence ID" value="NZ_OZ025638.1"/>
</dbReference>
<dbReference type="SMR" id="O07619"/>
<dbReference type="FunCoup" id="O07619">
    <property type="interactions" value="118"/>
</dbReference>
<dbReference type="STRING" id="224308.BSU10360"/>
<dbReference type="PaxDb" id="224308-BSU10360"/>
<dbReference type="EnsemblBacteria" id="CAB12876">
    <property type="protein sequence ID" value="CAB12876"/>
    <property type="gene ID" value="BSU_10360"/>
</dbReference>
<dbReference type="GeneID" id="936315"/>
<dbReference type="KEGG" id="bsu:BSU10360"/>
<dbReference type="PATRIC" id="fig|224308.179.peg.1114"/>
<dbReference type="eggNOG" id="COG0318">
    <property type="taxonomic scope" value="Bacteria"/>
</dbReference>
<dbReference type="InParanoid" id="O07619"/>
<dbReference type="OrthoDB" id="9757771at2"/>
<dbReference type="PhylomeDB" id="O07619"/>
<dbReference type="BioCyc" id="BSUB:BSU10360-MONOMER"/>
<dbReference type="Proteomes" id="UP000001570">
    <property type="component" value="Chromosome"/>
</dbReference>
<dbReference type="GO" id="GO:0005524">
    <property type="term" value="F:ATP binding"/>
    <property type="evidence" value="ECO:0007669"/>
    <property type="project" value="UniProtKB-KW"/>
</dbReference>
<dbReference type="GO" id="GO:0031956">
    <property type="term" value="F:medium-chain fatty acid-CoA ligase activity"/>
    <property type="evidence" value="ECO:0000318"/>
    <property type="project" value="GO_Central"/>
</dbReference>
<dbReference type="GO" id="GO:0006631">
    <property type="term" value="P:fatty acid metabolic process"/>
    <property type="evidence" value="ECO:0000318"/>
    <property type="project" value="GO_Central"/>
</dbReference>
<dbReference type="CDD" id="cd17633">
    <property type="entry name" value="AFD_YhfT-like"/>
    <property type="match status" value="1"/>
</dbReference>
<dbReference type="Gene3D" id="3.30.300.30">
    <property type="match status" value="1"/>
</dbReference>
<dbReference type="Gene3D" id="3.40.50.12780">
    <property type="entry name" value="N-terminal domain of ligase-like"/>
    <property type="match status" value="1"/>
</dbReference>
<dbReference type="InterPro" id="IPR025110">
    <property type="entry name" value="AMP-bd_C"/>
</dbReference>
<dbReference type="InterPro" id="IPR045851">
    <property type="entry name" value="AMP-bd_C_sf"/>
</dbReference>
<dbReference type="InterPro" id="IPR020845">
    <property type="entry name" value="AMP-binding_CS"/>
</dbReference>
<dbReference type="InterPro" id="IPR000873">
    <property type="entry name" value="AMP-dep_synth/lig_dom"/>
</dbReference>
<dbReference type="InterPro" id="IPR042099">
    <property type="entry name" value="ANL_N_sf"/>
</dbReference>
<dbReference type="NCBIfam" id="NF005797">
    <property type="entry name" value="PRK07638.1"/>
    <property type="match status" value="1"/>
</dbReference>
<dbReference type="PANTHER" id="PTHR43201">
    <property type="entry name" value="ACYL-COA SYNTHETASE"/>
    <property type="match status" value="1"/>
</dbReference>
<dbReference type="PANTHER" id="PTHR43201:SF5">
    <property type="entry name" value="MEDIUM-CHAIN ACYL-COA LIGASE ACSF2, MITOCHONDRIAL"/>
    <property type="match status" value="1"/>
</dbReference>
<dbReference type="Pfam" id="PF00501">
    <property type="entry name" value="AMP-binding"/>
    <property type="match status" value="1"/>
</dbReference>
<dbReference type="Pfam" id="PF13193">
    <property type="entry name" value="AMP-binding_C"/>
    <property type="match status" value="1"/>
</dbReference>
<dbReference type="SUPFAM" id="SSF56801">
    <property type="entry name" value="Acetyl-CoA synthetase-like"/>
    <property type="match status" value="1"/>
</dbReference>
<dbReference type="PROSITE" id="PS00455">
    <property type="entry name" value="AMP_BINDING"/>
    <property type="match status" value="1"/>
</dbReference>
<keyword id="KW-0067">ATP-binding</keyword>
<keyword id="KW-0436">Ligase</keyword>
<keyword id="KW-0547">Nucleotide-binding</keyword>
<keyword id="KW-1185">Reference proteome</keyword>
<feature type="chain" id="PRO_0000390293" description="Uncharacterized acyl--CoA ligase YhfT">
    <location>
        <begin position="1"/>
        <end position="479"/>
    </location>
</feature>
<feature type="binding site" evidence="1">
    <location>
        <begin position="150"/>
        <end position="158"/>
    </location>
    <ligand>
        <name>ATP</name>
        <dbReference type="ChEBI" id="CHEBI:30616"/>
    </ligand>
</feature>
<feature type="binding site" evidence="1">
    <location>
        <position position="360"/>
    </location>
    <ligand>
        <name>ATP</name>
        <dbReference type="ChEBI" id="CHEBI:30616"/>
    </ligand>
</feature>
<feature type="binding site" evidence="1">
    <location>
        <position position="375"/>
    </location>
    <ligand>
        <name>ATP</name>
        <dbReference type="ChEBI" id="CHEBI:30616"/>
    </ligand>
</feature>
<feature type="binding site" evidence="1">
    <location>
        <position position="462"/>
    </location>
    <ligand>
        <name>ATP</name>
        <dbReference type="ChEBI" id="CHEBI:30616"/>
    </ligand>
</feature>
<evidence type="ECO:0000255" key="1"/>
<evidence type="ECO:0000269" key="2">
    <source>
    </source>
</evidence>
<evidence type="ECO:0000305" key="3"/>
<sequence>MTITHTYSSTAETSPGRVAIQTESEQITYHDWDRLVSQTANWLRSQPSMPNRVAILLPNSLAFLQLFAGAAAAGCTAIPIDTRWSPAECKERLSISNADLVVTLAFFKNKLTDSQTPVVLLDNCMADISEAAADPLPTIDPEHPFYMGFTSGSTGKPKAFTRSHRSWMESFTCTETDFSISSDDKVLIPGALMSSHFLYGAVSTLFLGGTVCLLKKFSPAKAKEWLCRESISVLYTVPTMTDALARIEGFPDSPVKIISSGADWPAESKKKLAAAWPHLKLYDFYGTSELSFVTFSSPEDSKRKPHSAGRPFHNVRIEIRNAGGERCQPGEIGKIFVKSPMRFSGYVNGSTPDEWMTVDDMGYVDEEGFLYISGRENGMIVYGGLNIFPEEIERVLLACPEVESAAVVGIPDEYWGEIAVAVILGNANARTLKAWCKQKLASYKIPKKWVFADSLPETSSGKIARSRVKKWLEESVQYK</sequence>
<gene>
    <name type="primary">yhfT</name>
    <name type="ordered locus">BSU10360</name>
</gene>